<gene>
    <name evidence="1" type="primary">kdpA</name>
    <name type="ordered locus">MT1058</name>
</gene>
<reference key="1">
    <citation type="journal article" date="2002" name="J. Bacteriol.">
        <title>Whole-genome comparison of Mycobacterium tuberculosis clinical and laboratory strains.</title>
        <authorList>
            <person name="Fleischmann R.D."/>
            <person name="Alland D."/>
            <person name="Eisen J.A."/>
            <person name="Carpenter L."/>
            <person name="White O."/>
            <person name="Peterson J.D."/>
            <person name="DeBoy R.T."/>
            <person name="Dodson R.J."/>
            <person name="Gwinn M.L."/>
            <person name="Haft D.H."/>
            <person name="Hickey E.K."/>
            <person name="Kolonay J.F."/>
            <person name="Nelson W.C."/>
            <person name="Umayam L.A."/>
            <person name="Ermolaeva M.D."/>
            <person name="Salzberg S.L."/>
            <person name="Delcher A."/>
            <person name="Utterback T.R."/>
            <person name="Weidman J.F."/>
            <person name="Khouri H.M."/>
            <person name="Gill J."/>
            <person name="Mikula A."/>
            <person name="Bishai W."/>
            <person name="Jacobs W.R. Jr."/>
            <person name="Venter J.C."/>
            <person name="Fraser C.M."/>
        </authorList>
    </citation>
    <scope>NUCLEOTIDE SEQUENCE [LARGE SCALE GENOMIC DNA]</scope>
    <source>
        <strain>CDC 1551 / Oshkosh</strain>
    </source>
</reference>
<name>KDPA_MYCTO</name>
<dbReference type="EMBL" id="AE000516">
    <property type="protein sequence ID" value="AAK45310.1"/>
    <property type="molecule type" value="Genomic_DNA"/>
</dbReference>
<dbReference type="PIR" id="H70623">
    <property type="entry name" value="H70623"/>
</dbReference>
<dbReference type="RefSeq" id="WP_003405318.1">
    <property type="nucleotide sequence ID" value="NZ_KK341227.1"/>
</dbReference>
<dbReference type="SMR" id="P9WKF2"/>
<dbReference type="KEGG" id="mtc:MT1058"/>
<dbReference type="PATRIC" id="fig|83331.31.peg.1137"/>
<dbReference type="HOGENOM" id="CLU_018614_3_0_11"/>
<dbReference type="Proteomes" id="UP000001020">
    <property type="component" value="Chromosome"/>
</dbReference>
<dbReference type="GO" id="GO:0005886">
    <property type="term" value="C:plasma membrane"/>
    <property type="evidence" value="ECO:0007669"/>
    <property type="project" value="UniProtKB-SubCell"/>
</dbReference>
<dbReference type="GO" id="GO:0008556">
    <property type="term" value="F:P-type potassium transmembrane transporter activity"/>
    <property type="evidence" value="ECO:0007669"/>
    <property type="project" value="InterPro"/>
</dbReference>
<dbReference type="GO" id="GO:0030955">
    <property type="term" value="F:potassium ion binding"/>
    <property type="evidence" value="ECO:0007669"/>
    <property type="project" value="UniProtKB-UniRule"/>
</dbReference>
<dbReference type="HAMAP" id="MF_00275">
    <property type="entry name" value="KdpA"/>
    <property type="match status" value="1"/>
</dbReference>
<dbReference type="InterPro" id="IPR004623">
    <property type="entry name" value="KdpA"/>
</dbReference>
<dbReference type="NCBIfam" id="TIGR00680">
    <property type="entry name" value="kdpA"/>
    <property type="match status" value="1"/>
</dbReference>
<dbReference type="PANTHER" id="PTHR30607">
    <property type="entry name" value="POTASSIUM-TRANSPORTING ATPASE A CHAIN"/>
    <property type="match status" value="1"/>
</dbReference>
<dbReference type="PANTHER" id="PTHR30607:SF2">
    <property type="entry name" value="POTASSIUM-TRANSPORTING ATPASE POTASSIUM-BINDING SUBUNIT"/>
    <property type="match status" value="1"/>
</dbReference>
<dbReference type="Pfam" id="PF03814">
    <property type="entry name" value="KdpA"/>
    <property type="match status" value="1"/>
</dbReference>
<dbReference type="PIRSF" id="PIRSF001294">
    <property type="entry name" value="K_ATPaseA"/>
    <property type="match status" value="1"/>
</dbReference>
<protein>
    <recommendedName>
        <fullName evidence="1">Potassium-transporting ATPase potassium-binding subunit</fullName>
    </recommendedName>
    <alternativeName>
        <fullName evidence="1">ATP phosphohydrolase [potassium-transporting] A chain</fullName>
    </alternativeName>
    <alternativeName>
        <fullName evidence="1">Potassium-binding and translocating subunit A</fullName>
    </alternativeName>
    <alternativeName>
        <fullName evidence="1">Potassium-translocating ATPase A chain</fullName>
    </alternativeName>
</protein>
<accession>P9WKF2</accession>
<accession>L0T5I2</accession>
<accession>P65209</accession>
<accession>P96371</accession>
<feature type="chain" id="PRO_0000427664" description="Potassium-transporting ATPase potassium-binding subunit">
    <location>
        <begin position="1"/>
        <end position="571"/>
    </location>
</feature>
<feature type="transmembrane region" description="Helical" evidence="1">
    <location>
        <begin position="7"/>
        <end position="27"/>
    </location>
</feature>
<feature type="transmembrane region" description="Helical" evidence="1">
    <location>
        <begin position="66"/>
        <end position="86"/>
    </location>
</feature>
<feature type="transmembrane region" description="Helical" evidence="1">
    <location>
        <begin position="137"/>
        <end position="157"/>
    </location>
</feature>
<feature type="transmembrane region" description="Helical" evidence="1">
    <location>
        <begin position="188"/>
        <end position="208"/>
    </location>
</feature>
<feature type="transmembrane region" description="Helical" evidence="1">
    <location>
        <begin position="255"/>
        <end position="275"/>
    </location>
</feature>
<feature type="transmembrane region" description="Helical" evidence="1">
    <location>
        <begin position="286"/>
        <end position="306"/>
    </location>
</feature>
<feature type="transmembrane region" description="Helical" evidence="1">
    <location>
        <begin position="390"/>
        <end position="410"/>
    </location>
</feature>
<feature type="transmembrane region" description="Helical" evidence="1">
    <location>
        <begin position="430"/>
        <end position="450"/>
    </location>
</feature>
<feature type="transmembrane region" description="Helical" evidence="1">
    <location>
        <begin position="497"/>
        <end position="517"/>
    </location>
</feature>
<feature type="transmembrane region" description="Helical" evidence="1">
    <location>
        <begin position="538"/>
        <end position="558"/>
    </location>
</feature>
<evidence type="ECO:0000255" key="1">
    <source>
        <dbReference type="HAMAP-Rule" id="MF_00275"/>
    </source>
</evidence>
<comment type="function">
    <text evidence="1">Part of the high-affinity ATP-driven potassium transport (or Kdp) system, which catalyzes the hydrolysis of ATP coupled with the electrogenic transport of potassium into the cytoplasm. This subunit binds the extracellular potassium ions and delivers the ions to the membrane domain of KdpB through an intramembrane tunnel.</text>
</comment>
<comment type="subunit">
    <text evidence="1">The system is composed of three essential subunits: KdpA, KdpB and KdpC.</text>
</comment>
<comment type="subcellular location">
    <subcellularLocation>
        <location evidence="1">Cell membrane</location>
        <topology evidence="1">Multi-pass membrane protein</topology>
    </subcellularLocation>
</comment>
<comment type="similarity">
    <text evidence="1">Belongs to the KdpA family.</text>
</comment>
<keyword id="KW-1003">Cell membrane</keyword>
<keyword id="KW-0406">Ion transport</keyword>
<keyword id="KW-0472">Membrane</keyword>
<keyword id="KW-0630">Potassium</keyword>
<keyword id="KW-0633">Potassium transport</keyword>
<keyword id="KW-1185">Reference proteome</keyword>
<keyword id="KW-0812">Transmembrane</keyword>
<keyword id="KW-1133">Transmembrane helix</keyword>
<keyword id="KW-0813">Transport</keyword>
<organism>
    <name type="scientific">Mycobacterium tuberculosis (strain CDC 1551 / Oshkosh)</name>
    <dbReference type="NCBI Taxonomy" id="83331"/>
    <lineage>
        <taxon>Bacteria</taxon>
        <taxon>Bacillati</taxon>
        <taxon>Actinomycetota</taxon>
        <taxon>Actinomycetes</taxon>
        <taxon>Mycobacteriales</taxon>
        <taxon>Mycobacteriaceae</taxon>
        <taxon>Mycobacterium</taxon>
        <taxon>Mycobacterium tuberculosis complex</taxon>
    </lineage>
</organism>
<sequence>MSGTSWLQFAALIAVLLLTAPALGGYLAKIYGDEAKKPGDRVFGPIERVIYQVCRVDPGSEQRWSTYALSVLAFSVMSFLLLYGIARFQGVLPFNPTDKPAVTDHVAFNAAVSFMTNTNWQSYSGEATMSHFTQMTGLAVQNFVSASAGMCVLAALIRGLARKRASTLGNFWVDLARTVLRIMFPLSFVVAILLVSQGVIQNLHGFIVANTLEGAPQLIPGGPVASQVAIKQLGTNGGGFFNVNSAHPFENYTPIGNFVENWAILIIPFALCFAFGKMVHDRRQGWAVLAIMGIIWIGMSVAAMSFEAKGNPRLDALGVTQQTTVDQSGGNLEGKEVRFGVGASGLWAASTTGTSNGSVNSMHDSYTPLGGMVPLAHMMLGEVSPGGTGVGLNGLLVMAILAVFIAGLMVGRTPEYLGKKIQATEMKLVTLYILAMPIALLSFAAASVLISSALASRNNPGPHGLSEILYAYTSGANNNGSAFAGLTASTWSYDTTIGVAMLIGRFFLIIPVLAIAGSLARKGTTPVTAATFPTHKPLFVGLVIGVVLIVGGLTFFPALALGPIVEQLSTQ</sequence>
<proteinExistence type="inferred from homology"/>